<gene>
    <name type="primary">RABA2B</name>
    <name type="ordered locus">At1g07410</name>
    <name type="ORF">F22G5.24</name>
</gene>
<proteinExistence type="evidence at transcript level"/>
<reference key="1">
    <citation type="journal article" date="2000" name="Nature">
        <title>Sequence and analysis of chromosome 1 of the plant Arabidopsis thaliana.</title>
        <authorList>
            <person name="Theologis A."/>
            <person name="Ecker J.R."/>
            <person name="Palm C.J."/>
            <person name="Federspiel N.A."/>
            <person name="Kaul S."/>
            <person name="White O."/>
            <person name="Alonso J."/>
            <person name="Altafi H."/>
            <person name="Araujo R."/>
            <person name="Bowman C.L."/>
            <person name="Brooks S.Y."/>
            <person name="Buehler E."/>
            <person name="Chan A."/>
            <person name="Chao Q."/>
            <person name="Chen H."/>
            <person name="Cheuk R.F."/>
            <person name="Chin C.W."/>
            <person name="Chung M.K."/>
            <person name="Conn L."/>
            <person name="Conway A.B."/>
            <person name="Conway A.R."/>
            <person name="Creasy T.H."/>
            <person name="Dewar K."/>
            <person name="Dunn P."/>
            <person name="Etgu P."/>
            <person name="Feldblyum T.V."/>
            <person name="Feng J.-D."/>
            <person name="Fong B."/>
            <person name="Fujii C.Y."/>
            <person name="Gill J.E."/>
            <person name="Goldsmith A.D."/>
            <person name="Haas B."/>
            <person name="Hansen N.F."/>
            <person name="Hughes B."/>
            <person name="Huizar L."/>
            <person name="Hunter J.L."/>
            <person name="Jenkins J."/>
            <person name="Johnson-Hopson C."/>
            <person name="Khan S."/>
            <person name="Khaykin E."/>
            <person name="Kim C.J."/>
            <person name="Koo H.L."/>
            <person name="Kremenetskaia I."/>
            <person name="Kurtz D.B."/>
            <person name="Kwan A."/>
            <person name="Lam B."/>
            <person name="Langin-Hooper S."/>
            <person name="Lee A."/>
            <person name="Lee J.M."/>
            <person name="Lenz C.A."/>
            <person name="Li J.H."/>
            <person name="Li Y.-P."/>
            <person name="Lin X."/>
            <person name="Liu S.X."/>
            <person name="Liu Z.A."/>
            <person name="Luros J.S."/>
            <person name="Maiti R."/>
            <person name="Marziali A."/>
            <person name="Militscher J."/>
            <person name="Miranda M."/>
            <person name="Nguyen M."/>
            <person name="Nierman W.C."/>
            <person name="Osborne B.I."/>
            <person name="Pai G."/>
            <person name="Peterson J."/>
            <person name="Pham P.K."/>
            <person name="Rizzo M."/>
            <person name="Rooney T."/>
            <person name="Rowley D."/>
            <person name="Sakano H."/>
            <person name="Salzberg S.L."/>
            <person name="Schwartz J.R."/>
            <person name="Shinn P."/>
            <person name="Southwick A.M."/>
            <person name="Sun H."/>
            <person name="Tallon L.J."/>
            <person name="Tambunga G."/>
            <person name="Toriumi M.J."/>
            <person name="Town C.D."/>
            <person name="Utterback T."/>
            <person name="Van Aken S."/>
            <person name="Vaysberg M."/>
            <person name="Vysotskaia V.S."/>
            <person name="Walker M."/>
            <person name="Wu D."/>
            <person name="Yu G."/>
            <person name="Fraser C.M."/>
            <person name="Venter J.C."/>
            <person name="Davis R.W."/>
        </authorList>
    </citation>
    <scope>NUCLEOTIDE SEQUENCE [LARGE SCALE GENOMIC DNA]</scope>
    <source>
        <strain>cv. Columbia</strain>
    </source>
</reference>
<reference key="2">
    <citation type="journal article" date="2017" name="Plant J.">
        <title>Araport11: a complete reannotation of the Arabidopsis thaliana reference genome.</title>
        <authorList>
            <person name="Cheng C.Y."/>
            <person name="Krishnakumar V."/>
            <person name="Chan A.P."/>
            <person name="Thibaud-Nissen F."/>
            <person name="Schobel S."/>
            <person name="Town C.D."/>
        </authorList>
    </citation>
    <scope>GENOME REANNOTATION</scope>
    <source>
        <strain>cv. Columbia</strain>
    </source>
</reference>
<reference key="3">
    <citation type="journal article" date="2003" name="Plant Physiol.">
        <title>Analysis of the small GTPase gene superfamily of Arabidopsis.</title>
        <authorList>
            <person name="Vernoud V."/>
            <person name="Horton A.C."/>
            <person name="Yang Z."/>
            <person name="Nielsen E."/>
        </authorList>
    </citation>
    <scope>GENE FAMILY</scope>
    <scope>NOMENCLATURE</scope>
</reference>
<reference key="4">
    <citation type="journal article" date="2008" name="Plant Cell">
        <title>Rab-A2 and Rab-A3 GTPases define a trans-Golgi endosomal membrane domain in Arabidopsis that contributes substantially to the cell plate.</title>
        <authorList>
            <person name="Chow C.M."/>
            <person name="Neto H."/>
            <person name="Foucart C."/>
            <person name="Moore I."/>
        </authorList>
    </citation>
    <scope>SUBCELLULAR LOCATION</scope>
    <scope>TISSUE SPECIFICITY</scope>
</reference>
<sequence length="214" mass="23689">MANRIDHEYDYLFKIVLIGDSGVGKSNILSRFTRNEFCLESKSTIGVEFATRTLQVEGKTVKAQIWDTAGQERYRAITSAYYRGAVGALLVYDITKRQTFENVLRWLRELRDHADSNIVIMMAGNKSDLNHLRSVADEDGRSLAEKEGLSFLETSALEATNIEKAFQTILSEIYHIISKKALAAQEAAGNLPGQGTAINISDSSATNRKGCCST</sequence>
<accession>Q9LNW1</accession>
<evidence type="ECO:0000250" key="1"/>
<evidence type="ECO:0000269" key="2">
    <source>
    </source>
</evidence>
<evidence type="ECO:0000305" key="3"/>
<evidence type="ECO:0000305" key="4">
    <source>
    </source>
</evidence>
<dbReference type="EMBL" id="AC022464">
    <property type="protein sequence ID" value="AAF79570.1"/>
    <property type="status" value="ALT_SEQ"/>
    <property type="molecule type" value="Genomic_DNA"/>
</dbReference>
<dbReference type="EMBL" id="CP002684">
    <property type="protein sequence ID" value="AEE28121.1"/>
    <property type="molecule type" value="Genomic_DNA"/>
</dbReference>
<dbReference type="PIR" id="A86209">
    <property type="entry name" value="A86209"/>
</dbReference>
<dbReference type="RefSeq" id="NP_172221.1">
    <property type="nucleotide sequence ID" value="NM_100615.3"/>
</dbReference>
<dbReference type="SMR" id="Q9LNW1"/>
<dbReference type="FunCoup" id="Q9LNW1">
    <property type="interactions" value="2160"/>
</dbReference>
<dbReference type="STRING" id="3702.Q9LNW1"/>
<dbReference type="iPTMnet" id="Q9LNW1"/>
<dbReference type="PaxDb" id="3702-AT1G07410.1"/>
<dbReference type="ProteomicsDB" id="236557"/>
<dbReference type="EnsemblPlants" id="AT1G07410.1">
    <property type="protein sequence ID" value="AT1G07410.1"/>
    <property type="gene ID" value="AT1G07410"/>
</dbReference>
<dbReference type="GeneID" id="837253"/>
<dbReference type="Gramene" id="AT1G07410.1">
    <property type="protein sequence ID" value="AT1G07410.1"/>
    <property type="gene ID" value="AT1G07410"/>
</dbReference>
<dbReference type="KEGG" id="ath:AT1G07410"/>
<dbReference type="Araport" id="AT1G07410"/>
<dbReference type="TAIR" id="AT1G07410">
    <property type="gene designation" value="RABA2B"/>
</dbReference>
<dbReference type="eggNOG" id="KOG0087">
    <property type="taxonomic scope" value="Eukaryota"/>
</dbReference>
<dbReference type="HOGENOM" id="CLU_041217_23_0_1"/>
<dbReference type="InParanoid" id="Q9LNW1"/>
<dbReference type="OMA" id="NNKRPCC"/>
<dbReference type="OrthoDB" id="9989112at2759"/>
<dbReference type="PRO" id="PR:Q9LNW1"/>
<dbReference type="Proteomes" id="UP000006548">
    <property type="component" value="Chromosome 1"/>
</dbReference>
<dbReference type="ExpressionAtlas" id="Q9LNW1">
    <property type="expression patterns" value="baseline and differential"/>
</dbReference>
<dbReference type="GO" id="GO:0009504">
    <property type="term" value="C:cell plate"/>
    <property type="evidence" value="ECO:0000314"/>
    <property type="project" value="TAIR"/>
</dbReference>
<dbReference type="GO" id="GO:0005768">
    <property type="term" value="C:endosome"/>
    <property type="evidence" value="ECO:0000314"/>
    <property type="project" value="TAIR"/>
</dbReference>
<dbReference type="GO" id="GO:0010008">
    <property type="term" value="C:endosome membrane"/>
    <property type="evidence" value="ECO:0007669"/>
    <property type="project" value="UniProtKB-SubCell"/>
</dbReference>
<dbReference type="GO" id="GO:0005794">
    <property type="term" value="C:Golgi apparatus"/>
    <property type="evidence" value="ECO:0007669"/>
    <property type="project" value="UniProtKB-SubCell"/>
</dbReference>
<dbReference type="GO" id="GO:0005886">
    <property type="term" value="C:plasma membrane"/>
    <property type="evidence" value="ECO:0007005"/>
    <property type="project" value="TAIR"/>
</dbReference>
<dbReference type="GO" id="GO:0005525">
    <property type="term" value="F:GTP binding"/>
    <property type="evidence" value="ECO:0007669"/>
    <property type="project" value="UniProtKB-KW"/>
</dbReference>
<dbReference type="GO" id="GO:0003924">
    <property type="term" value="F:GTPase activity"/>
    <property type="evidence" value="ECO:0007669"/>
    <property type="project" value="InterPro"/>
</dbReference>
<dbReference type="GO" id="GO:0042546">
    <property type="term" value="P:cell wall biogenesis"/>
    <property type="evidence" value="ECO:0000315"/>
    <property type="project" value="TAIR"/>
</dbReference>
<dbReference type="GO" id="GO:0015031">
    <property type="term" value="P:protein transport"/>
    <property type="evidence" value="ECO:0007669"/>
    <property type="project" value="UniProtKB-KW"/>
</dbReference>
<dbReference type="CDD" id="cd01868">
    <property type="entry name" value="Rab11_like"/>
    <property type="match status" value="1"/>
</dbReference>
<dbReference type="FunFam" id="3.40.50.300:FF:000067">
    <property type="entry name" value="ras-related protein RABA1f"/>
    <property type="match status" value="1"/>
</dbReference>
<dbReference type="Gene3D" id="3.40.50.300">
    <property type="entry name" value="P-loop containing nucleotide triphosphate hydrolases"/>
    <property type="match status" value="1"/>
</dbReference>
<dbReference type="InterPro" id="IPR027417">
    <property type="entry name" value="P-loop_NTPase"/>
</dbReference>
<dbReference type="InterPro" id="IPR050209">
    <property type="entry name" value="Rab_GTPases_membrane_traffic"/>
</dbReference>
<dbReference type="InterPro" id="IPR005225">
    <property type="entry name" value="Small_GTP-bd"/>
</dbReference>
<dbReference type="InterPro" id="IPR001806">
    <property type="entry name" value="Small_GTPase"/>
</dbReference>
<dbReference type="NCBIfam" id="TIGR00231">
    <property type="entry name" value="small_GTP"/>
    <property type="match status" value="1"/>
</dbReference>
<dbReference type="PANTHER" id="PTHR47979">
    <property type="entry name" value="DRAB11-RELATED"/>
    <property type="match status" value="1"/>
</dbReference>
<dbReference type="Pfam" id="PF00071">
    <property type="entry name" value="Ras"/>
    <property type="match status" value="1"/>
</dbReference>
<dbReference type="PRINTS" id="PR00449">
    <property type="entry name" value="RASTRNSFRMNG"/>
</dbReference>
<dbReference type="SMART" id="SM00177">
    <property type="entry name" value="ARF"/>
    <property type="match status" value="1"/>
</dbReference>
<dbReference type="SMART" id="SM00175">
    <property type="entry name" value="RAB"/>
    <property type="match status" value="1"/>
</dbReference>
<dbReference type="SMART" id="SM00176">
    <property type="entry name" value="RAN"/>
    <property type="match status" value="1"/>
</dbReference>
<dbReference type="SMART" id="SM00173">
    <property type="entry name" value="RAS"/>
    <property type="match status" value="1"/>
</dbReference>
<dbReference type="SMART" id="SM00174">
    <property type="entry name" value="RHO"/>
    <property type="match status" value="1"/>
</dbReference>
<dbReference type="SUPFAM" id="SSF52540">
    <property type="entry name" value="P-loop containing nucleoside triphosphate hydrolases"/>
    <property type="match status" value="1"/>
</dbReference>
<dbReference type="PROSITE" id="PS51419">
    <property type="entry name" value="RAB"/>
    <property type="match status" value="1"/>
</dbReference>
<keyword id="KW-0967">Endosome</keyword>
<keyword id="KW-0333">Golgi apparatus</keyword>
<keyword id="KW-0342">GTP-binding</keyword>
<keyword id="KW-0449">Lipoprotein</keyword>
<keyword id="KW-0472">Membrane</keyword>
<keyword id="KW-0547">Nucleotide-binding</keyword>
<keyword id="KW-0636">Prenylation</keyword>
<keyword id="KW-0653">Protein transport</keyword>
<keyword id="KW-1185">Reference proteome</keyword>
<keyword id="KW-0813">Transport</keyword>
<feature type="chain" id="PRO_0000407341" description="Ras-related protein RABA2b">
    <location>
        <begin position="1"/>
        <end position="214"/>
    </location>
</feature>
<feature type="short sequence motif" description="Effector region" evidence="1">
    <location>
        <begin position="41"/>
        <end position="49"/>
    </location>
</feature>
<feature type="binding site" evidence="1">
    <location>
        <begin position="19"/>
        <end position="26"/>
    </location>
    <ligand>
        <name>GTP</name>
        <dbReference type="ChEBI" id="CHEBI:37565"/>
    </ligand>
</feature>
<feature type="binding site" evidence="1">
    <location>
        <begin position="67"/>
        <end position="71"/>
    </location>
    <ligand>
        <name>GTP</name>
        <dbReference type="ChEBI" id="CHEBI:37565"/>
    </ligand>
</feature>
<feature type="binding site" evidence="1">
    <location>
        <begin position="125"/>
        <end position="128"/>
    </location>
    <ligand>
        <name>GTP</name>
        <dbReference type="ChEBI" id="CHEBI:37565"/>
    </ligand>
</feature>
<feature type="binding site" evidence="1">
    <location>
        <begin position="155"/>
        <end position="156"/>
    </location>
    <ligand>
        <name>GTP</name>
        <dbReference type="ChEBI" id="CHEBI:37565"/>
    </ligand>
</feature>
<feature type="lipid moiety-binding region" description="S-geranylgeranyl cysteine" evidence="1">
    <location>
        <position position="211"/>
    </location>
</feature>
<feature type="lipid moiety-binding region" description="S-geranylgeranyl cysteine" evidence="1">
    <location>
        <position position="212"/>
    </location>
</feature>
<protein>
    <recommendedName>
        <fullName>Ras-related protein RABA2b</fullName>
        <shortName>AtRABA2b</shortName>
    </recommendedName>
</protein>
<name>RAA2B_ARATH</name>
<comment type="function">
    <text evidence="1">Intracellular vesicle trafficking and protein transport.</text>
</comment>
<comment type="subcellular location">
    <subcellularLocation>
        <location evidence="2">Endosome membrane</location>
    </subcellularLocation>
    <subcellularLocation>
        <location evidence="4">Golgi apparatus</location>
        <location evidence="4">trans-Golgi network membrane</location>
        <topology evidence="4">Lipid-anchor</topology>
    </subcellularLocation>
    <text>During cytokinesis located to the growing margins of the cell plate.</text>
</comment>
<comment type="tissue specificity">
    <text evidence="2">Expressed in root tips.</text>
</comment>
<comment type="similarity">
    <text evidence="3">Belongs to the small GTPase superfamily. Rab family.</text>
</comment>
<comment type="sequence caution" evidence="3">
    <conflict type="erroneous gene model prediction">
        <sequence resource="EMBL-CDS" id="AAF79570"/>
    </conflict>
</comment>
<organism>
    <name type="scientific">Arabidopsis thaliana</name>
    <name type="common">Mouse-ear cress</name>
    <dbReference type="NCBI Taxonomy" id="3702"/>
    <lineage>
        <taxon>Eukaryota</taxon>
        <taxon>Viridiplantae</taxon>
        <taxon>Streptophyta</taxon>
        <taxon>Embryophyta</taxon>
        <taxon>Tracheophyta</taxon>
        <taxon>Spermatophyta</taxon>
        <taxon>Magnoliopsida</taxon>
        <taxon>eudicotyledons</taxon>
        <taxon>Gunneridae</taxon>
        <taxon>Pentapetalae</taxon>
        <taxon>rosids</taxon>
        <taxon>malvids</taxon>
        <taxon>Brassicales</taxon>
        <taxon>Brassicaceae</taxon>
        <taxon>Camelineae</taxon>
        <taxon>Arabidopsis</taxon>
    </lineage>
</organism>